<keyword id="KW-0008">Acetylcholine receptor inhibiting toxin</keyword>
<keyword id="KW-0027">Amidation</keyword>
<keyword id="KW-1015">Disulfide bond</keyword>
<keyword id="KW-0872">Ion channel impairing toxin</keyword>
<keyword id="KW-0528">Neurotoxin</keyword>
<keyword id="KW-0629">Postsynaptic neurotoxin</keyword>
<keyword id="KW-0964">Secreted</keyword>
<keyword id="KW-0800">Toxin</keyword>
<evidence type="ECO:0000250" key="1">
    <source>
        <dbReference type="UniProtKB" id="P56636"/>
    </source>
</evidence>
<evidence type="ECO:0000250" key="2">
    <source>
        <dbReference type="UniProtKB" id="Q2I2R8"/>
    </source>
</evidence>
<evidence type="ECO:0000303" key="3">
    <source>
    </source>
</evidence>
<evidence type="ECO:0000305" key="4"/>
<evidence type="ECO:0000305" key="5">
    <source>
    </source>
</evidence>
<organism>
    <name type="scientific">Conus leopardus</name>
    <name type="common">Leopard cone</name>
    <dbReference type="NCBI Taxonomy" id="101306"/>
    <lineage>
        <taxon>Eukaryota</taxon>
        <taxon>Metazoa</taxon>
        <taxon>Spiralia</taxon>
        <taxon>Lophotrochozoa</taxon>
        <taxon>Mollusca</taxon>
        <taxon>Gastropoda</taxon>
        <taxon>Caenogastropoda</taxon>
        <taxon>Neogastropoda</taxon>
        <taxon>Conoidea</taxon>
        <taxon>Conidae</taxon>
        <taxon>Conus</taxon>
        <taxon>Lithoconus</taxon>
    </lineage>
</organism>
<proteinExistence type="evidence at protein level"/>
<protein>
    <recommendedName>
        <fullName evidence="3">Alpha-conotoxin-like Lp1.10</fullName>
    </recommendedName>
</protein>
<name>CA1A_CONLE</name>
<accession>A6M938</accession>
<feature type="propeptide" id="PRO_0000370659" evidence="5">
    <location>
        <begin position="1" status="less than"/>
        <end position="27"/>
    </location>
</feature>
<feature type="peptide" id="PRO_0000370660" description="Alpha-conotoxin-like Lp1.10" evidence="5">
    <location>
        <begin position="28"/>
        <end position="44"/>
    </location>
</feature>
<feature type="region of interest" description="Lacks the Ser-Xaa-Pro motif that is crucial for potent interaction with nAChR" evidence="4">
    <location>
        <begin position="32"/>
        <end position="34"/>
    </location>
</feature>
<feature type="modified residue" description="Cysteine amide" evidence="5">
    <location>
        <position position="44"/>
    </location>
</feature>
<feature type="disulfide bond" evidence="1">
    <location>
        <begin position="30"/>
        <end position="36"/>
    </location>
</feature>
<feature type="disulfide bond" evidence="1">
    <location>
        <begin position="31"/>
        <end position="44"/>
    </location>
</feature>
<feature type="non-terminal residue">
    <location>
        <position position="1"/>
    </location>
</feature>
<reference key="1">
    <citation type="journal article" date="2007" name="Toxicon">
        <title>From the identification of gene organization of alpha conotoxins to the cloning of novel toxins.</title>
        <authorList>
            <person name="Yuan D.-D."/>
            <person name="Han Y.-H."/>
            <person name="Wang C.-G."/>
            <person name="Chi C.-W."/>
        </authorList>
    </citation>
    <scope>NUCLEOTIDE SEQUENCE [GENOMIC DNA]</scope>
    <scope>AMIDATION AT CYS-44</scope>
</reference>
<dbReference type="EMBL" id="DQ359144">
    <property type="protein sequence ID" value="ABD48795.1"/>
    <property type="molecule type" value="Genomic_DNA"/>
</dbReference>
<dbReference type="ConoServer" id="574">
    <property type="toxin name" value="Lp1.10 precursor"/>
</dbReference>
<dbReference type="GO" id="GO:0005576">
    <property type="term" value="C:extracellular region"/>
    <property type="evidence" value="ECO:0007669"/>
    <property type="project" value="UniProtKB-SubCell"/>
</dbReference>
<dbReference type="GO" id="GO:0035792">
    <property type="term" value="C:host cell postsynaptic membrane"/>
    <property type="evidence" value="ECO:0007669"/>
    <property type="project" value="UniProtKB-KW"/>
</dbReference>
<dbReference type="GO" id="GO:0030550">
    <property type="term" value="F:acetylcholine receptor inhibitor activity"/>
    <property type="evidence" value="ECO:0007669"/>
    <property type="project" value="UniProtKB-KW"/>
</dbReference>
<dbReference type="GO" id="GO:0099106">
    <property type="term" value="F:ion channel regulator activity"/>
    <property type="evidence" value="ECO:0007669"/>
    <property type="project" value="UniProtKB-KW"/>
</dbReference>
<dbReference type="GO" id="GO:0090729">
    <property type="term" value="F:toxin activity"/>
    <property type="evidence" value="ECO:0007669"/>
    <property type="project" value="UniProtKB-KW"/>
</dbReference>
<dbReference type="InterPro" id="IPR009958">
    <property type="entry name" value="Conotoxin_a-typ"/>
</dbReference>
<dbReference type="Pfam" id="PF07365">
    <property type="entry name" value="Toxin_8"/>
    <property type="match status" value="1"/>
</dbReference>
<comment type="function">
    <text evidence="2">Alpha-conotoxins act on postsynaptic membranes, they bind to the nicotinic acetylcholine receptors (nAChR) and thus inhibit them (By similarity). Has possibly a distinct nAChR binding mode from other alpha-conotoxins, due to a different three residue motif (lacks the Ser-Xaa-Pro motif) (By similarity).</text>
</comment>
<comment type="subcellular location">
    <subcellularLocation>
        <location evidence="5">Secreted</location>
    </subcellularLocation>
</comment>
<comment type="tissue specificity">
    <text evidence="5">Expressed by the venom duct.</text>
</comment>
<comment type="domain">
    <text evidence="4">The cysteine framework is I (CC-C-C). Alpha4/7 pattern.</text>
</comment>
<comment type="similarity">
    <text evidence="4">Belongs to the conotoxin A superfamily.</text>
</comment>
<sequence length="45" mass="4596">VVLGPASDGRNAAANVKAPDLIALTVRNDCCHNAPCRNNHPGICG</sequence>